<reference key="1">
    <citation type="journal article" date="2010" name="J. Bacteriol.">
        <title>Genome sequence of the deep-rooted Yersinia pestis strain Angola reveals new insights into the evolution and pangenome of the plague bacterium.</title>
        <authorList>
            <person name="Eppinger M."/>
            <person name="Worsham P.L."/>
            <person name="Nikolich M.P."/>
            <person name="Riley D.R."/>
            <person name="Sebastian Y."/>
            <person name="Mou S."/>
            <person name="Achtman M."/>
            <person name="Lindler L.E."/>
            <person name="Ravel J."/>
        </authorList>
    </citation>
    <scope>NUCLEOTIDE SEQUENCE [LARGE SCALE GENOMIC DNA]</scope>
    <source>
        <strain>Angola</strain>
    </source>
</reference>
<evidence type="ECO:0000255" key="1">
    <source>
        <dbReference type="HAMAP-Rule" id="MF_00048"/>
    </source>
</evidence>
<feature type="chain" id="PRO_1000091277" description="UPF0102 protein YpAngola_A1121">
    <location>
        <begin position="1"/>
        <end position="117"/>
    </location>
</feature>
<comment type="similarity">
    <text evidence="1">Belongs to the UPF0102 family.</text>
</comment>
<sequence length="117" mass="13077">MSQRDTGAHYENLARRHLERAGLVFQAANVAFRGGEIDLIMRDGDAWVFVEVRFRRNDLFGGAAASITPRKQQRLHLAAAVWLAQRGASFATTSCRFDVVAITGNQLEWLPNAFNTD</sequence>
<proteinExistence type="inferred from homology"/>
<dbReference type="EMBL" id="CP000901">
    <property type="protein sequence ID" value="ABX86175.1"/>
    <property type="molecule type" value="Genomic_DNA"/>
</dbReference>
<dbReference type="RefSeq" id="WP_002210147.1">
    <property type="nucleotide sequence ID" value="NZ_CP009935.1"/>
</dbReference>
<dbReference type="SMR" id="A9R1Q7"/>
<dbReference type="KEGG" id="ypg:YpAngola_A1121"/>
<dbReference type="PATRIC" id="fig|349746.12.peg.2072"/>
<dbReference type="GO" id="GO:0003676">
    <property type="term" value="F:nucleic acid binding"/>
    <property type="evidence" value="ECO:0007669"/>
    <property type="project" value="InterPro"/>
</dbReference>
<dbReference type="CDD" id="cd20736">
    <property type="entry name" value="PoNe_Nuclease"/>
    <property type="match status" value="1"/>
</dbReference>
<dbReference type="Gene3D" id="3.40.1350.10">
    <property type="match status" value="1"/>
</dbReference>
<dbReference type="HAMAP" id="MF_00048">
    <property type="entry name" value="UPF0102"/>
    <property type="match status" value="1"/>
</dbReference>
<dbReference type="InterPro" id="IPR011335">
    <property type="entry name" value="Restrct_endonuc-II-like"/>
</dbReference>
<dbReference type="InterPro" id="IPR011856">
    <property type="entry name" value="tRNA_endonuc-like_dom_sf"/>
</dbReference>
<dbReference type="InterPro" id="IPR003509">
    <property type="entry name" value="UPF0102_YraN-like"/>
</dbReference>
<dbReference type="NCBIfam" id="NF009150">
    <property type="entry name" value="PRK12497.1-3"/>
    <property type="match status" value="1"/>
</dbReference>
<dbReference type="NCBIfam" id="TIGR00252">
    <property type="entry name" value="YraN family protein"/>
    <property type="match status" value="1"/>
</dbReference>
<dbReference type="PANTHER" id="PTHR34039">
    <property type="entry name" value="UPF0102 PROTEIN YRAN"/>
    <property type="match status" value="1"/>
</dbReference>
<dbReference type="PANTHER" id="PTHR34039:SF1">
    <property type="entry name" value="UPF0102 PROTEIN YRAN"/>
    <property type="match status" value="1"/>
</dbReference>
<dbReference type="Pfam" id="PF02021">
    <property type="entry name" value="UPF0102"/>
    <property type="match status" value="1"/>
</dbReference>
<dbReference type="SUPFAM" id="SSF52980">
    <property type="entry name" value="Restriction endonuclease-like"/>
    <property type="match status" value="1"/>
</dbReference>
<protein>
    <recommendedName>
        <fullName evidence="1">UPF0102 protein YpAngola_A1121</fullName>
    </recommendedName>
</protein>
<organism>
    <name type="scientific">Yersinia pestis bv. Antiqua (strain Angola)</name>
    <dbReference type="NCBI Taxonomy" id="349746"/>
    <lineage>
        <taxon>Bacteria</taxon>
        <taxon>Pseudomonadati</taxon>
        <taxon>Pseudomonadota</taxon>
        <taxon>Gammaproteobacteria</taxon>
        <taxon>Enterobacterales</taxon>
        <taxon>Yersiniaceae</taxon>
        <taxon>Yersinia</taxon>
    </lineage>
</organism>
<accession>A9R1Q7</accession>
<name>Y1121_YERPG</name>
<gene>
    <name type="ordered locus">YpAngola_A1121</name>
</gene>